<proteinExistence type="inferred from homology"/>
<protein>
    <recommendedName>
        <fullName evidence="1">HTH-type transcriptional regulator HdfR</fullName>
    </recommendedName>
    <alternativeName>
        <fullName evidence="1">H-NS-dependent flhDC regulator</fullName>
    </alternativeName>
</protein>
<name>HDFR_SHISS</name>
<comment type="function">
    <text evidence="1">Negatively regulates the transcription of the flagellar master operon flhDC by binding to the upstream region of the operon.</text>
</comment>
<comment type="similarity">
    <text evidence="2">Belongs to the LysR transcriptional regulatory family.</text>
</comment>
<evidence type="ECO:0000255" key="1">
    <source>
        <dbReference type="HAMAP-Rule" id="MF_01233"/>
    </source>
</evidence>
<evidence type="ECO:0000305" key="2"/>
<gene>
    <name evidence="1" type="primary">hdfR</name>
    <name type="ordered locus">SSON_3932</name>
</gene>
<organism>
    <name type="scientific">Shigella sonnei (strain Ss046)</name>
    <dbReference type="NCBI Taxonomy" id="300269"/>
    <lineage>
        <taxon>Bacteria</taxon>
        <taxon>Pseudomonadati</taxon>
        <taxon>Pseudomonadota</taxon>
        <taxon>Gammaproteobacteria</taxon>
        <taxon>Enterobacterales</taxon>
        <taxon>Enterobacteriaceae</taxon>
        <taxon>Shigella</taxon>
    </lineage>
</organism>
<accession>Q3YVK2</accession>
<feature type="chain" id="PRO_1000066900" description="HTH-type transcriptional regulator HdfR">
    <location>
        <begin position="1"/>
        <end position="279"/>
    </location>
</feature>
<feature type="domain" description="HTH lysR-type" evidence="1">
    <location>
        <begin position="1"/>
        <end position="58"/>
    </location>
</feature>
<feature type="DNA-binding region" description="H-T-H motif" evidence="1">
    <location>
        <begin position="18"/>
        <end position="37"/>
    </location>
</feature>
<sequence>MDTELLKTFLEVSRTRHFGRAAESLYLTQSAVSFRIRQLENQLGVNLFTRHRNNIRLTAAGEKLLPYAETLMSTWQAARKEVAHTSRHNEFSIGASASLWECMLNQWLGRLYQNQDAHTGLQFEARIAQRQSLVKQLHERQLDLLITTEAPKMDEFSSQLLGYFTLALYTSAPSKLKGDLNYLRLEWGPDFQQHEAGLIGADEVPILTTSSAELAQQQIAMLNGCTWLPVSWARKKGGLHTVVDSTTLSRPLYAIWLQNSDKNALIRDLLKINVLDEVY</sequence>
<dbReference type="EMBL" id="CP000038">
    <property type="protein sequence ID" value="AAZ90460.1"/>
    <property type="molecule type" value="Genomic_DNA"/>
</dbReference>
<dbReference type="RefSeq" id="WP_000379245.1">
    <property type="nucleotide sequence ID" value="NC_007384.1"/>
</dbReference>
<dbReference type="SMR" id="Q3YVK2"/>
<dbReference type="GeneID" id="93778187"/>
<dbReference type="KEGG" id="ssn:SSON_3932"/>
<dbReference type="HOGENOM" id="CLU_039613_8_2_6"/>
<dbReference type="Proteomes" id="UP000002529">
    <property type="component" value="Chromosome"/>
</dbReference>
<dbReference type="GO" id="GO:0003677">
    <property type="term" value="F:DNA binding"/>
    <property type="evidence" value="ECO:0007669"/>
    <property type="project" value="UniProtKB-KW"/>
</dbReference>
<dbReference type="GO" id="GO:0003700">
    <property type="term" value="F:DNA-binding transcription factor activity"/>
    <property type="evidence" value="ECO:0007669"/>
    <property type="project" value="UniProtKB-UniRule"/>
</dbReference>
<dbReference type="GO" id="GO:0045892">
    <property type="term" value="P:negative regulation of DNA-templated transcription"/>
    <property type="evidence" value="ECO:0007669"/>
    <property type="project" value="UniProtKB-UniRule"/>
</dbReference>
<dbReference type="FunFam" id="1.10.10.10:FF:000001">
    <property type="entry name" value="LysR family transcriptional regulator"/>
    <property type="match status" value="1"/>
</dbReference>
<dbReference type="Gene3D" id="3.40.190.10">
    <property type="entry name" value="Periplasmic binding protein-like II"/>
    <property type="match status" value="2"/>
</dbReference>
<dbReference type="Gene3D" id="1.10.10.10">
    <property type="entry name" value="Winged helix-like DNA-binding domain superfamily/Winged helix DNA-binding domain"/>
    <property type="match status" value="1"/>
</dbReference>
<dbReference type="HAMAP" id="MF_01233">
    <property type="entry name" value="HTH_type_HdfR"/>
    <property type="match status" value="1"/>
</dbReference>
<dbReference type="InterPro" id="IPR050176">
    <property type="entry name" value="LTTR"/>
</dbReference>
<dbReference type="InterPro" id="IPR005119">
    <property type="entry name" value="LysR_subst-bd"/>
</dbReference>
<dbReference type="InterPro" id="IPR020890">
    <property type="entry name" value="Tscrpt_reg_HTH_HdfR"/>
</dbReference>
<dbReference type="InterPro" id="IPR000847">
    <property type="entry name" value="Tscrpt_reg_HTH_LysR"/>
</dbReference>
<dbReference type="InterPro" id="IPR036388">
    <property type="entry name" value="WH-like_DNA-bd_sf"/>
</dbReference>
<dbReference type="InterPro" id="IPR036390">
    <property type="entry name" value="WH_DNA-bd_sf"/>
</dbReference>
<dbReference type="NCBIfam" id="NF002946">
    <property type="entry name" value="PRK03601.1"/>
    <property type="match status" value="1"/>
</dbReference>
<dbReference type="PANTHER" id="PTHR30579:SF8">
    <property type="entry name" value="HTH-TYPE TRANSCRIPTIONAL REGULATOR HDFR"/>
    <property type="match status" value="1"/>
</dbReference>
<dbReference type="PANTHER" id="PTHR30579">
    <property type="entry name" value="TRANSCRIPTIONAL REGULATOR"/>
    <property type="match status" value="1"/>
</dbReference>
<dbReference type="Pfam" id="PF00126">
    <property type="entry name" value="HTH_1"/>
    <property type="match status" value="1"/>
</dbReference>
<dbReference type="Pfam" id="PF03466">
    <property type="entry name" value="LysR_substrate"/>
    <property type="match status" value="1"/>
</dbReference>
<dbReference type="PRINTS" id="PR00039">
    <property type="entry name" value="HTHLYSR"/>
</dbReference>
<dbReference type="SUPFAM" id="SSF53850">
    <property type="entry name" value="Periplasmic binding protein-like II"/>
    <property type="match status" value="1"/>
</dbReference>
<dbReference type="SUPFAM" id="SSF46785">
    <property type="entry name" value="Winged helix' DNA-binding domain"/>
    <property type="match status" value="1"/>
</dbReference>
<dbReference type="PROSITE" id="PS50931">
    <property type="entry name" value="HTH_LYSR"/>
    <property type="match status" value="1"/>
</dbReference>
<keyword id="KW-0238">DNA-binding</keyword>
<keyword id="KW-1185">Reference proteome</keyword>
<keyword id="KW-0678">Repressor</keyword>
<keyword id="KW-0804">Transcription</keyword>
<keyword id="KW-0805">Transcription regulation</keyword>
<reference key="1">
    <citation type="journal article" date="2005" name="Nucleic Acids Res.">
        <title>Genome dynamics and diversity of Shigella species, the etiologic agents of bacillary dysentery.</title>
        <authorList>
            <person name="Yang F."/>
            <person name="Yang J."/>
            <person name="Zhang X."/>
            <person name="Chen L."/>
            <person name="Jiang Y."/>
            <person name="Yan Y."/>
            <person name="Tang X."/>
            <person name="Wang J."/>
            <person name="Xiong Z."/>
            <person name="Dong J."/>
            <person name="Xue Y."/>
            <person name="Zhu Y."/>
            <person name="Xu X."/>
            <person name="Sun L."/>
            <person name="Chen S."/>
            <person name="Nie H."/>
            <person name="Peng J."/>
            <person name="Xu J."/>
            <person name="Wang Y."/>
            <person name="Yuan Z."/>
            <person name="Wen Y."/>
            <person name="Yao Z."/>
            <person name="Shen Y."/>
            <person name="Qiang B."/>
            <person name="Hou Y."/>
            <person name="Yu J."/>
            <person name="Jin Q."/>
        </authorList>
    </citation>
    <scope>NUCLEOTIDE SEQUENCE [LARGE SCALE GENOMIC DNA]</scope>
    <source>
        <strain>Ss046</strain>
    </source>
</reference>